<accession>Q09G09</accession>
<dbReference type="EMBL" id="DQ923116">
    <property type="protein sequence ID" value="ABI49816.1"/>
    <property type="molecule type" value="Genomic_DNA"/>
</dbReference>
<dbReference type="RefSeq" id="YP_740602.1">
    <property type="nucleotide sequence ID" value="NC_008335.1"/>
</dbReference>
<dbReference type="SMR" id="Q09G09"/>
<dbReference type="GeneID" id="4271277"/>
<dbReference type="GO" id="GO:0009507">
    <property type="term" value="C:chloroplast"/>
    <property type="evidence" value="ECO:0007669"/>
    <property type="project" value="UniProtKB-SubCell"/>
</dbReference>
<dbReference type="GO" id="GO:0022625">
    <property type="term" value="C:cytosolic large ribosomal subunit"/>
    <property type="evidence" value="ECO:0007669"/>
    <property type="project" value="TreeGrafter"/>
</dbReference>
<dbReference type="GO" id="GO:0070180">
    <property type="term" value="F:large ribosomal subunit rRNA binding"/>
    <property type="evidence" value="ECO:0007669"/>
    <property type="project" value="TreeGrafter"/>
</dbReference>
<dbReference type="GO" id="GO:0003735">
    <property type="term" value="F:structural constituent of ribosome"/>
    <property type="evidence" value="ECO:0007669"/>
    <property type="project" value="InterPro"/>
</dbReference>
<dbReference type="GO" id="GO:0006412">
    <property type="term" value="P:translation"/>
    <property type="evidence" value="ECO:0007669"/>
    <property type="project" value="UniProtKB-UniRule"/>
</dbReference>
<dbReference type="CDD" id="cd00337">
    <property type="entry name" value="Ribosomal_uL14"/>
    <property type="match status" value="1"/>
</dbReference>
<dbReference type="FunFam" id="2.40.150.20:FF:000002">
    <property type="entry name" value="50S ribosomal protein L14, chloroplastic"/>
    <property type="match status" value="1"/>
</dbReference>
<dbReference type="Gene3D" id="2.40.150.20">
    <property type="entry name" value="Ribosomal protein L14"/>
    <property type="match status" value="1"/>
</dbReference>
<dbReference type="HAMAP" id="MF_01367">
    <property type="entry name" value="Ribosomal_uL14"/>
    <property type="match status" value="1"/>
</dbReference>
<dbReference type="InterPro" id="IPR000218">
    <property type="entry name" value="Ribosomal_uL14"/>
</dbReference>
<dbReference type="InterPro" id="IPR005745">
    <property type="entry name" value="Ribosomal_uL14_bac-type"/>
</dbReference>
<dbReference type="InterPro" id="IPR019972">
    <property type="entry name" value="Ribosomal_uL14_CS"/>
</dbReference>
<dbReference type="InterPro" id="IPR036853">
    <property type="entry name" value="Ribosomal_uL14_sf"/>
</dbReference>
<dbReference type="NCBIfam" id="TIGR01067">
    <property type="entry name" value="rplN_bact"/>
    <property type="match status" value="1"/>
</dbReference>
<dbReference type="PANTHER" id="PTHR11761">
    <property type="entry name" value="50S/60S RIBOSOMAL PROTEIN L14/L23"/>
    <property type="match status" value="1"/>
</dbReference>
<dbReference type="PANTHER" id="PTHR11761:SF3">
    <property type="entry name" value="LARGE RIBOSOMAL SUBUNIT PROTEIN UL14M"/>
    <property type="match status" value="1"/>
</dbReference>
<dbReference type="Pfam" id="PF00238">
    <property type="entry name" value="Ribosomal_L14"/>
    <property type="match status" value="1"/>
</dbReference>
<dbReference type="SMART" id="SM01374">
    <property type="entry name" value="Ribosomal_L14"/>
    <property type="match status" value="1"/>
</dbReference>
<dbReference type="SUPFAM" id="SSF50193">
    <property type="entry name" value="Ribosomal protein L14"/>
    <property type="match status" value="1"/>
</dbReference>
<dbReference type="PROSITE" id="PS00049">
    <property type="entry name" value="RIBOSOMAL_L14"/>
    <property type="match status" value="1"/>
</dbReference>
<reference key="1">
    <citation type="journal article" date="2006" name="BMC Plant Biol.">
        <title>Rapid and accurate pyrosequencing of angiosperm plastid genomes.</title>
        <authorList>
            <person name="Moore M.J."/>
            <person name="Dhingra A."/>
            <person name="Soltis P.S."/>
            <person name="Shaw R."/>
            <person name="Farmerie W.G."/>
            <person name="Folta K.M."/>
            <person name="Soltis D.E."/>
        </authorList>
    </citation>
    <scope>NUCLEOTIDE SEQUENCE [LARGE SCALE GENOMIC DNA]</scope>
</reference>
<sequence>MIQPQTHLNVADNSGARELMCIRIIGASNRRYAHIGDVIVAVIKEAVPNMPLERSEVIRAVIVRTCKELKRDNGMIIRYDDNAAVVIDQEGNPKGTRVFGAIARELRQLSFTKIVSLAPEVL</sequence>
<keyword id="KW-0150">Chloroplast</keyword>
<keyword id="KW-0934">Plastid</keyword>
<keyword id="KW-0687">Ribonucleoprotein</keyword>
<keyword id="KW-0689">Ribosomal protein</keyword>
<keyword id="KW-0694">RNA-binding</keyword>
<keyword id="KW-0699">rRNA-binding</keyword>
<geneLocation type="chloroplast"/>
<evidence type="ECO:0000255" key="1">
    <source>
        <dbReference type="HAMAP-Rule" id="MF_01367"/>
    </source>
</evidence>
<evidence type="ECO:0000305" key="2"/>
<name>RK14_PLAOC</name>
<gene>
    <name evidence="1" type="primary">rpl14</name>
</gene>
<feature type="chain" id="PRO_0000355901" description="Large ribosomal subunit protein uL14c">
    <location>
        <begin position="1"/>
        <end position="122"/>
    </location>
</feature>
<proteinExistence type="inferred from homology"/>
<comment type="function">
    <text evidence="1">Binds to 23S rRNA.</text>
</comment>
<comment type="subunit">
    <text evidence="1">Part of the 50S ribosomal subunit.</text>
</comment>
<comment type="subcellular location">
    <subcellularLocation>
        <location>Plastid</location>
        <location>Chloroplast</location>
    </subcellularLocation>
</comment>
<comment type="similarity">
    <text evidence="1">Belongs to the universal ribosomal protein uL14 family.</text>
</comment>
<organism>
    <name type="scientific">Platanus occidentalis</name>
    <name type="common">Sycamore</name>
    <name type="synonym">American plane tree</name>
    <dbReference type="NCBI Taxonomy" id="4403"/>
    <lineage>
        <taxon>Eukaryota</taxon>
        <taxon>Viridiplantae</taxon>
        <taxon>Streptophyta</taxon>
        <taxon>Embryophyta</taxon>
        <taxon>Tracheophyta</taxon>
        <taxon>Spermatophyta</taxon>
        <taxon>Magnoliopsida</taxon>
        <taxon>Proteales</taxon>
        <taxon>Platanaceae</taxon>
        <taxon>Platanus</taxon>
    </lineage>
</organism>
<protein>
    <recommendedName>
        <fullName evidence="1">Large ribosomal subunit protein uL14c</fullName>
    </recommendedName>
    <alternativeName>
        <fullName evidence="2">50S ribosomal protein L14, chloroplastic</fullName>
    </alternativeName>
</protein>